<proteinExistence type="inferred from homology"/>
<dbReference type="EC" id="4.4.1.21" evidence="1"/>
<dbReference type="EMBL" id="CP000764">
    <property type="protein sequence ID" value="ABS23671.1"/>
    <property type="molecule type" value="Genomic_DNA"/>
</dbReference>
<dbReference type="RefSeq" id="WP_012095919.1">
    <property type="nucleotide sequence ID" value="NC_009674.1"/>
</dbReference>
<dbReference type="SMR" id="A7GU63"/>
<dbReference type="STRING" id="315749.Bcer98_3461"/>
<dbReference type="GeneID" id="33898695"/>
<dbReference type="KEGG" id="bcy:Bcer98_3461"/>
<dbReference type="eggNOG" id="COG1854">
    <property type="taxonomic scope" value="Bacteria"/>
</dbReference>
<dbReference type="HOGENOM" id="CLU_107531_2_0_9"/>
<dbReference type="OrthoDB" id="9788129at2"/>
<dbReference type="Proteomes" id="UP000002300">
    <property type="component" value="Chromosome"/>
</dbReference>
<dbReference type="GO" id="GO:0005506">
    <property type="term" value="F:iron ion binding"/>
    <property type="evidence" value="ECO:0007669"/>
    <property type="project" value="InterPro"/>
</dbReference>
<dbReference type="GO" id="GO:0043768">
    <property type="term" value="F:S-ribosylhomocysteine lyase activity"/>
    <property type="evidence" value="ECO:0007669"/>
    <property type="project" value="UniProtKB-UniRule"/>
</dbReference>
<dbReference type="GO" id="GO:0009372">
    <property type="term" value="P:quorum sensing"/>
    <property type="evidence" value="ECO:0007669"/>
    <property type="project" value="UniProtKB-UniRule"/>
</dbReference>
<dbReference type="Gene3D" id="3.30.1360.80">
    <property type="entry name" value="S-ribosylhomocysteinase (LuxS)"/>
    <property type="match status" value="1"/>
</dbReference>
<dbReference type="HAMAP" id="MF_00091">
    <property type="entry name" value="LuxS"/>
    <property type="match status" value="1"/>
</dbReference>
<dbReference type="InterPro" id="IPR037005">
    <property type="entry name" value="LuxS_sf"/>
</dbReference>
<dbReference type="InterPro" id="IPR011249">
    <property type="entry name" value="Metalloenz_LuxS/M16"/>
</dbReference>
<dbReference type="InterPro" id="IPR003815">
    <property type="entry name" value="S-ribosylhomocysteinase"/>
</dbReference>
<dbReference type="NCBIfam" id="NF002603">
    <property type="entry name" value="PRK02260.1-3"/>
    <property type="match status" value="1"/>
</dbReference>
<dbReference type="PANTHER" id="PTHR35799">
    <property type="entry name" value="S-RIBOSYLHOMOCYSTEINE LYASE"/>
    <property type="match status" value="1"/>
</dbReference>
<dbReference type="PANTHER" id="PTHR35799:SF1">
    <property type="entry name" value="S-RIBOSYLHOMOCYSTEINE LYASE"/>
    <property type="match status" value="1"/>
</dbReference>
<dbReference type="Pfam" id="PF02664">
    <property type="entry name" value="LuxS"/>
    <property type="match status" value="1"/>
</dbReference>
<dbReference type="PIRSF" id="PIRSF006160">
    <property type="entry name" value="AI2"/>
    <property type="match status" value="1"/>
</dbReference>
<dbReference type="PRINTS" id="PR01487">
    <property type="entry name" value="LUXSPROTEIN"/>
</dbReference>
<dbReference type="SUPFAM" id="SSF63411">
    <property type="entry name" value="LuxS/MPP-like metallohydrolase"/>
    <property type="match status" value="1"/>
</dbReference>
<reference key="1">
    <citation type="journal article" date="2008" name="Chem. Biol. Interact.">
        <title>Extending the Bacillus cereus group genomics to putative food-borne pathogens of different toxicity.</title>
        <authorList>
            <person name="Lapidus A."/>
            <person name="Goltsman E."/>
            <person name="Auger S."/>
            <person name="Galleron N."/>
            <person name="Segurens B."/>
            <person name="Dossat C."/>
            <person name="Land M.L."/>
            <person name="Broussolle V."/>
            <person name="Brillard J."/>
            <person name="Guinebretiere M.-H."/>
            <person name="Sanchis V."/>
            <person name="Nguen-the C."/>
            <person name="Lereclus D."/>
            <person name="Richardson P."/>
            <person name="Wincker P."/>
            <person name="Weissenbach J."/>
            <person name="Ehrlich S.D."/>
            <person name="Sorokin A."/>
        </authorList>
    </citation>
    <scope>NUCLEOTIDE SEQUENCE [LARGE SCALE GENOMIC DNA]</scope>
    <source>
        <strain>DSM 22905 / CIP 110041 / 391-98 / NVH 391-98</strain>
    </source>
</reference>
<accession>A7GU63</accession>
<organism>
    <name type="scientific">Bacillus cytotoxicus (strain DSM 22905 / CIP 110041 / 391-98 / NVH 391-98)</name>
    <dbReference type="NCBI Taxonomy" id="315749"/>
    <lineage>
        <taxon>Bacteria</taxon>
        <taxon>Bacillati</taxon>
        <taxon>Bacillota</taxon>
        <taxon>Bacilli</taxon>
        <taxon>Bacillales</taxon>
        <taxon>Bacillaceae</taxon>
        <taxon>Bacillus</taxon>
        <taxon>Bacillus cereus group</taxon>
    </lineage>
</organism>
<keyword id="KW-0071">Autoinducer synthesis</keyword>
<keyword id="KW-0408">Iron</keyword>
<keyword id="KW-0456">Lyase</keyword>
<keyword id="KW-0479">Metal-binding</keyword>
<keyword id="KW-0673">Quorum sensing</keyword>
<sequence>MPSVESFELDHTIVKAPYVRHCGVHQVGSDGIVNKFDIRFCQPNKQAMKPDVIHTLEHLLAFNLRKYIDRYPHFDIIDISPMGCQTGYYLVVSGTPTVREIIDLLELTLKDAVQITEIPAANETQCGQAKLHDLEGAKRLMNFWLSQDKDDLEKVFG</sequence>
<comment type="function">
    <text evidence="1">Involved in the synthesis of autoinducer 2 (AI-2) which is secreted by bacteria and is used to communicate both the cell density and the metabolic potential of the environment. The regulation of gene expression in response to changes in cell density is called quorum sensing. Catalyzes the transformation of S-ribosylhomocysteine (RHC) to homocysteine (HC) and 4,5-dihydroxy-2,3-pentadione (DPD).</text>
</comment>
<comment type="catalytic activity">
    <reaction evidence="1">
        <text>S-(5-deoxy-D-ribos-5-yl)-L-homocysteine = (S)-4,5-dihydroxypentane-2,3-dione + L-homocysteine</text>
        <dbReference type="Rhea" id="RHEA:17753"/>
        <dbReference type="ChEBI" id="CHEBI:29484"/>
        <dbReference type="ChEBI" id="CHEBI:58195"/>
        <dbReference type="ChEBI" id="CHEBI:58199"/>
        <dbReference type="EC" id="4.4.1.21"/>
    </reaction>
</comment>
<comment type="cofactor">
    <cofactor evidence="1">
        <name>Fe cation</name>
        <dbReference type="ChEBI" id="CHEBI:24875"/>
    </cofactor>
    <text evidence="1">Binds 1 Fe cation per subunit.</text>
</comment>
<comment type="subunit">
    <text evidence="1">Homodimer.</text>
</comment>
<comment type="similarity">
    <text evidence="1">Belongs to the LuxS family.</text>
</comment>
<gene>
    <name evidence="1" type="primary">luxS</name>
    <name type="ordered locus">Bcer98_3461</name>
</gene>
<name>LUXS_BACCN</name>
<protein>
    <recommendedName>
        <fullName evidence="1">S-ribosylhomocysteine lyase</fullName>
        <ecNumber evidence="1">4.4.1.21</ecNumber>
    </recommendedName>
    <alternativeName>
        <fullName evidence="1">AI-2 synthesis protein</fullName>
    </alternativeName>
    <alternativeName>
        <fullName evidence="1">Autoinducer-2 production protein LuxS</fullName>
    </alternativeName>
</protein>
<evidence type="ECO:0000255" key="1">
    <source>
        <dbReference type="HAMAP-Rule" id="MF_00091"/>
    </source>
</evidence>
<feature type="chain" id="PRO_1000075451" description="S-ribosylhomocysteine lyase">
    <location>
        <begin position="1"/>
        <end position="157"/>
    </location>
</feature>
<feature type="binding site" evidence="1">
    <location>
        <position position="54"/>
    </location>
    <ligand>
        <name>Fe cation</name>
        <dbReference type="ChEBI" id="CHEBI:24875"/>
    </ligand>
</feature>
<feature type="binding site" evidence="1">
    <location>
        <position position="58"/>
    </location>
    <ligand>
        <name>Fe cation</name>
        <dbReference type="ChEBI" id="CHEBI:24875"/>
    </ligand>
</feature>
<feature type="binding site" evidence="1">
    <location>
        <position position="126"/>
    </location>
    <ligand>
        <name>Fe cation</name>
        <dbReference type="ChEBI" id="CHEBI:24875"/>
    </ligand>
</feature>